<accession>A6LHQ6</accession>
<feature type="signal peptide" evidence="1">
    <location>
        <begin position="1"/>
        <end position="16"/>
    </location>
</feature>
<feature type="propeptide" id="PRO_0000436733" evidence="3">
    <location>
        <begin position="17"/>
        <end position="47"/>
    </location>
</feature>
<feature type="chain" id="PRO_0000436734" description="Putative fimbrium tip subunit Fim1C">
    <location>
        <begin position="48"/>
        <end position="375"/>
    </location>
</feature>
<feature type="lipid moiety-binding region" description="N-palmitoyl cysteine" evidence="1">
    <location>
        <position position="17"/>
    </location>
</feature>
<feature type="lipid moiety-binding region" description="S-diacylglycerol cysteine" evidence="1">
    <location>
        <position position="17"/>
    </location>
</feature>
<feature type="strand" evidence="8">
    <location>
        <begin position="34"/>
        <end position="41"/>
    </location>
</feature>
<feature type="helix" evidence="8">
    <location>
        <begin position="51"/>
        <end position="53"/>
    </location>
</feature>
<feature type="turn" evidence="8">
    <location>
        <begin position="58"/>
        <end position="61"/>
    </location>
</feature>
<feature type="strand" evidence="8">
    <location>
        <begin position="65"/>
        <end position="72"/>
    </location>
</feature>
<feature type="strand" evidence="8">
    <location>
        <begin position="75"/>
        <end position="85"/>
    </location>
</feature>
<feature type="strand" evidence="8">
    <location>
        <begin position="90"/>
        <end position="99"/>
    </location>
</feature>
<feature type="strand" evidence="8">
    <location>
        <begin position="101"/>
        <end position="104"/>
    </location>
</feature>
<feature type="strand" evidence="8">
    <location>
        <begin position="106"/>
        <end position="113"/>
    </location>
</feature>
<feature type="turn" evidence="8">
    <location>
        <begin position="116"/>
        <end position="118"/>
    </location>
</feature>
<feature type="helix" evidence="8">
    <location>
        <begin position="119"/>
        <end position="121"/>
    </location>
</feature>
<feature type="helix" evidence="8">
    <location>
        <begin position="125"/>
        <end position="128"/>
    </location>
</feature>
<feature type="strand" evidence="8">
    <location>
        <begin position="132"/>
        <end position="134"/>
    </location>
</feature>
<feature type="helix" evidence="8">
    <location>
        <begin position="135"/>
        <end position="137"/>
    </location>
</feature>
<feature type="strand" evidence="8">
    <location>
        <begin position="158"/>
        <end position="164"/>
    </location>
</feature>
<feature type="helix" evidence="8">
    <location>
        <begin position="166"/>
        <end position="171"/>
    </location>
</feature>
<feature type="helix" evidence="8">
    <location>
        <begin position="173"/>
        <end position="175"/>
    </location>
</feature>
<feature type="strand" evidence="8">
    <location>
        <begin position="180"/>
        <end position="197"/>
    </location>
</feature>
<feature type="turn" evidence="8">
    <location>
        <begin position="202"/>
        <end position="205"/>
    </location>
</feature>
<feature type="strand" evidence="8">
    <location>
        <begin position="208"/>
        <end position="218"/>
    </location>
</feature>
<feature type="strand" evidence="8">
    <location>
        <begin position="221"/>
        <end position="224"/>
    </location>
</feature>
<feature type="strand" evidence="8">
    <location>
        <begin position="263"/>
        <end position="268"/>
    </location>
</feature>
<feature type="strand" evidence="8">
    <location>
        <begin position="270"/>
        <end position="275"/>
    </location>
</feature>
<feature type="strand" evidence="8">
    <location>
        <begin position="278"/>
        <end position="285"/>
    </location>
</feature>
<feature type="strand" evidence="8">
    <location>
        <begin position="289"/>
        <end position="291"/>
    </location>
</feature>
<feature type="strand" evidence="8">
    <location>
        <begin position="294"/>
        <end position="301"/>
    </location>
</feature>
<feature type="turn" evidence="8">
    <location>
        <begin position="302"/>
        <end position="310"/>
    </location>
</feature>
<feature type="strand" evidence="8">
    <location>
        <begin position="314"/>
        <end position="316"/>
    </location>
</feature>
<feature type="strand" evidence="8">
    <location>
        <begin position="320"/>
        <end position="329"/>
    </location>
</feature>
<feature type="strand" evidence="8">
    <location>
        <begin position="352"/>
        <end position="354"/>
    </location>
</feature>
<feature type="strand" evidence="8">
    <location>
        <begin position="357"/>
        <end position="364"/>
    </location>
</feature>
<organism evidence="6">
    <name type="scientific">Parabacteroides distasonis (strain ATCC 8503 / DSM 20701 / CIP 104284 / JCM 5825 / NCTC 11152)</name>
    <dbReference type="NCBI Taxonomy" id="435591"/>
    <lineage>
        <taxon>Bacteria</taxon>
        <taxon>Pseudomonadati</taxon>
        <taxon>Bacteroidota</taxon>
        <taxon>Bacteroidia</taxon>
        <taxon>Bacteroidales</taxon>
        <taxon>Tannerellaceae</taxon>
        <taxon>Parabacteroides</taxon>
    </lineage>
</organism>
<sequence length="375" mass="41000">MKLLANIFLSGLAILACVSCSKDEDPVLPLEGAKLSVAVKASGTATKAYNPNDVNELEGEAYINNLAVVVFNETGTELLGYKWEALSGAEHSAIIADVPTTKAVRARIIVLANVPRDLLSTVSTYDEFQTRLVDLSSQSQTNLTMSSQVIVTKSALSEEDNYLGYTDLGDQNVDGISDPILLTRVAARIDLVNISTRFAGTPFAGREVRIDAVGIYNMKTKSYYFSEADWGETEAPDAVRNSEDTSFEDLLVNDGTSISNTPFVHYVMENMKSDDHTMIAVKATLRGNSSYQDHTKIFTAVINAGGLQNGYDHNFIRRNYVYRLRIYFDGESFDNIPVTPDPGPGPDPEPEVDTNLNIAVQVVGWGPVMQHPVID</sequence>
<keyword id="KW-0002">3D-structure</keyword>
<keyword id="KW-0998">Cell outer membrane</keyword>
<keyword id="KW-0281">Fimbrium</keyword>
<keyword id="KW-0449">Lipoprotein</keyword>
<keyword id="KW-0472">Membrane</keyword>
<keyword id="KW-0564">Palmitate</keyword>
<keyword id="KW-1185">Reference proteome</keyword>
<keyword id="KW-0732">Signal</keyword>
<protein>
    <recommendedName>
        <fullName>Putative fimbrium tip subunit Fim1C</fullName>
    </recommendedName>
</protein>
<name>FIM1C_PARD8</name>
<proteinExistence type="evidence at protein level"/>
<gene>
    <name evidence="5" type="ordered locus">BDI_3519</name>
</gene>
<dbReference type="EMBL" id="CP000140">
    <property type="protein sequence ID" value="ABR45220.1"/>
    <property type="molecule type" value="Genomic_DNA"/>
</dbReference>
<dbReference type="RefSeq" id="WP_009016908.1">
    <property type="nucleotide sequence ID" value="NC_009615.1"/>
</dbReference>
<dbReference type="PDB" id="4JG5">
    <property type="method" value="X-ray"/>
    <property type="resolution" value="2.34 A"/>
    <property type="chains" value="A=22-375"/>
</dbReference>
<dbReference type="PDBsum" id="4JG5"/>
<dbReference type="SMR" id="A6LHQ6"/>
<dbReference type="STRING" id="435591.BDI_3519"/>
<dbReference type="PaxDb" id="435591-BDI_3519"/>
<dbReference type="DNASU" id="5308668"/>
<dbReference type="KEGG" id="pdi:BDI_3519"/>
<dbReference type="HOGENOM" id="CLU_741558_0_0_10"/>
<dbReference type="BioCyc" id="PDIS435591:G1G5A-3611-MONOMER"/>
<dbReference type="Proteomes" id="UP000000566">
    <property type="component" value="Chromosome"/>
</dbReference>
<dbReference type="GO" id="GO:0009279">
    <property type="term" value="C:cell outer membrane"/>
    <property type="evidence" value="ECO:0007669"/>
    <property type="project" value="UniProtKB-SubCell"/>
</dbReference>
<dbReference type="GO" id="GO:0009289">
    <property type="term" value="C:pilus"/>
    <property type="evidence" value="ECO:0007669"/>
    <property type="project" value="UniProtKB-SubCell"/>
</dbReference>
<dbReference type="Gene3D" id="2.60.40.2580">
    <property type="match status" value="1"/>
</dbReference>
<dbReference type="Gene3D" id="2.60.40.3690">
    <property type="match status" value="1"/>
</dbReference>
<dbReference type="InterPro" id="IPR049370">
    <property type="entry name" value="Fim1C-like_C"/>
</dbReference>
<dbReference type="InterPro" id="IPR029141">
    <property type="entry name" value="FimA_N"/>
</dbReference>
<dbReference type="Pfam" id="PF21489">
    <property type="entry name" value="Fim1C-like_C"/>
    <property type="match status" value="1"/>
</dbReference>
<dbReference type="Pfam" id="PF06321">
    <property type="entry name" value="P_gingi_FimA"/>
    <property type="match status" value="1"/>
</dbReference>
<dbReference type="PROSITE" id="PS51257">
    <property type="entry name" value="PROKAR_LIPOPROTEIN"/>
    <property type="match status" value="1"/>
</dbReference>
<comment type="function">
    <text evidence="4">Probably a component of the fimbrium tip. Fimbriae are filamentous appendages on the cell surface that mediate cell adhesion and biofilm formation.</text>
</comment>
<comment type="subunit">
    <text evidence="4">May be part of the fimbrial tip.</text>
</comment>
<comment type="subcellular location">
    <subcellularLocation>
        <location evidence="4">Fimbrium</location>
    </subcellularLocation>
    <subcellularLocation>
        <location evidence="2">Cell outer membrane</location>
    </subcellularLocation>
    <text evidence="4">Probably synthesized as a palmitoylated precursor. Efficient export to the outer membrane and integration into fimbriae requires lipidation and subsequent proteolytic removal of the lipidated propeptide. Probably part of the fimbrium tip.</text>
</comment>
<comment type="similarity">
    <text evidence="2">Belongs to the bacteroidetes fimbrillin superfamily. FimA/Mfa1 family.</text>
</comment>
<evidence type="ECO:0000255" key="1">
    <source>
        <dbReference type="PROSITE-ProRule" id="PRU00303"/>
    </source>
</evidence>
<evidence type="ECO:0000305" key="2"/>
<evidence type="ECO:0000305" key="3">
    <source>
    </source>
</evidence>
<evidence type="ECO:0000305" key="4">
    <source>
    </source>
</evidence>
<evidence type="ECO:0000312" key="5">
    <source>
        <dbReference type="EMBL" id="ABR45220.1"/>
    </source>
</evidence>
<evidence type="ECO:0000312" key="6">
    <source>
        <dbReference type="Proteomes" id="UP000000566"/>
    </source>
</evidence>
<evidence type="ECO:0007744" key="7">
    <source>
        <dbReference type="PDB" id="4JG5"/>
    </source>
</evidence>
<evidence type="ECO:0007829" key="8">
    <source>
        <dbReference type="PDB" id="4JG5"/>
    </source>
</evidence>
<reference evidence="5 6" key="1">
    <citation type="journal article" date="2007" name="PLoS Biol.">
        <title>Evolution of symbiotic bacteria in the distal human intestine.</title>
        <authorList>
            <person name="Xu J."/>
            <person name="Mahowald M.A."/>
            <person name="Ley R.E."/>
            <person name="Lozupone C.A."/>
            <person name="Hamady M."/>
            <person name="Martens E.C."/>
            <person name="Henrissat B."/>
            <person name="Coutinho P.M."/>
            <person name="Minx P."/>
            <person name="Latreille P."/>
            <person name="Cordum H."/>
            <person name="Van Brunt A."/>
            <person name="Kim K."/>
            <person name="Fulton R.S."/>
            <person name="Fulton L.A."/>
            <person name="Clifton S.W."/>
            <person name="Wilson R.K."/>
            <person name="Knight R.D."/>
            <person name="Gordon J.I."/>
        </authorList>
    </citation>
    <scope>NUCLEOTIDE SEQUENCE [LARGE SCALE GENOMIC DNA]</scope>
    <source>
        <strain evidence="6">ATCC 8503 / DSM 20701 / CIP 104284 / JCM 5825 / NCTC 11152</strain>
    </source>
</reference>
<reference key="2">
    <citation type="journal article" date="2016" name="Sci. Rep.">
        <title>Structure of the fimbrial protein Mfa4 from Porphyromonas gingivalis in its precursor form: implications for a donor-strand complementation mechanism.</title>
        <authorList>
            <person name="Kloppsteck P."/>
            <person name="Hall M."/>
            <person name="Hasegawa Y."/>
            <person name="Persson K."/>
        </authorList>
    </citation>
    <scope>PREDICTED PROPEPTIDE CLEAVAGE</scope>
</reference>
<reference evidence="7" key="3">
    <citation type="journal article" date="2016" name="Cell">
        <title>A distinct type of pilus from the human microbiome.</title>
        <authorList>
            <person name="Xu Q."/>
            <person name="Shoji M."/>
            <person name="Shibata S."/>
            <person name="Naito M."/>
            <person name="Sato K."/>
            <person name="Elsliger M.A."/>
            <person name="Grant J.C."/>
            <person name="Axelrod H.L."/>
            <person name="Chiu H.J."/>
            <person name="Farr C.L."/>
            <person name="Jaroszewski L."/>
            <person name="Knuth M.W."/>
            <person name="Deacon A.M."/>
            <person name="Godzik A."/>
            <person name="Lesley S.A."/>
            <person name="Curtis M.A."/>
            <person name="Nakayama K."/>
            <person name="Wilson I.A."/>
        </authorList>
    </citation>
    <scope>X-RAY CRYSTALLOGRAPHY (2.34 ANGSTROMS) OF 22-375</scope>
    <scope>FUNCTION</scope>
    <scope>SUBCELLULAR LOCATION</scope>
    <scope>SUBUNIT</scope>
    <source>
        <strain>ATCC 8503 / DSM 20701 / CIP 104284 / JCM 5825 / NCTC 11152</strain>
    </source>
</reference>